<gene>
    <name evidence="1" type="primary">psb28</name>
    <name evidence="1" type="synonym">psbW</name>
</gene>
<proteinExistence type="inferred from homology"/>
<comment type="subunit">
    <text evidence="1">Part of the photosystem II complex.</text>
</comment>
<comment type="subcellular location">
    <subcellularLocation>
        <location evidence="1">Plastid</location>
        <location evidence="1">Chloroplast thylakoid membrane</location>
        <topology evidence="1">Peripheral membrane protein</topology>
        <orientation evidence="1">Stromal side</orientation>
    </subcellularLocation>
</comment>
<comment type="similarity">
    <text evidence="1">Belongs to the Psb28 family.</text>
</comment>
<evidence type="ECO:0000255" key="1">
    <source>
        <dbReference type="HAMAP-Rule" id="MF_01370"/>
    </source>
</evidence>
<accession>A0T0W9</accession>
<dbReference type="EMBL" id="EF067921">
    <property type="protein sequence ID" value="ABK20804.1"/>
    <property type="molecule type" value="Genomic_DNA"/>
</dbReference>
<dbReference type="RefSeq" id="YP_874581.1">
    <property type="nucleotide sequence ID" value="NC_008589.1"/>
</dbReference>
<dbReference type="SMR" id="A0T0W9"/>
<dbReference type="STRING" id="35128.A0T0W9"/>
<dbReference type="GeneID" id="4524718"/>
<dbReference type="InParanoid" id="A0T0W9"/>
<dbReference type="GO" id="GO:0009535">
    <property type="term" value="C:chloroplast thylakoid membrane"/>
    <property type="evidence" value="ECO:0007669"/>
    <property type="project" value="UniProtKB-SubCell"/>
</dbReference>
<dbReference type="GO" id="GO:0009523">
    <property type="term" value="C:photosystem II"/>
    <property type="evidence" value="ECO:0007669"/>
    <property type="project" value="UniProtKB-KW"/>
</dbReference>
<dbReference type="GO" id="GO:0015979">
    <property type="term" value="P:photosynthesis"/>
    <property type="evidence" value="ECO:0007669"/>
    <property type="project" value="UniProtKB-UniRule"/>
</dbReference>
<dbReference type="FunFam" id="2.40.30.220:FF:000001">
    <property type="entry name" value="Photosystem II reaction center Psb28 protein"/>
    <property type="match status" value="1"/>
</dbReference>
<dbReference type="Gene3D" id="2.40.30.220">
    <property type="entry name" value="Photosystem II Psb28"/>
    <property type="match status" value="1"/>
</dbReference>
<dbReference type="HAMAP" id="MF_01370">
    <property type="entry name" value="PSII_Psb28"/>
    <property type="match status" value="1"/>
</dbReference>
<dbReference type="InterPro" id="IPR038676">
    <property type="entry name" value="Psb28_c1_sf"/>
</dbReference>
<dbReference type="InterPro" id="IPR005610">
    <property type="entry name" value="PSII_Psb28_class-1"/>
</dbReference>
<dbReference type="NCBIfam" id="TIGR03047">
    <property type="entry name" value="PS_II_psb28"/>
    <property type="match status" value="1"/>
</dbReference>
<dbReference type="PANTHER" id="PTHR34963">
    <property type="match status" value="1"/>
</dbReference>
<dbReference type="PANTHER" id="PTHR34963:SF2">
    <property type="entry name" value="PHOTOSYSTEM II REACTION CENTER PSB28 PROTEIN, CHLOROPLASTIC"/>
    <property type="match status" value="1"/>
</dbReference>
<dbReference type="Pfam" id="PF03912">
    <property type="entry name" value="Psb28"/>
    <property type="match status" value="1"/>
</dbReference>
<name>PSB28_THAPS</name>
<organism>
    <name type="scientific">Thalassiosira pseudonana</name>
    <name type="common">Marine diatom</name>
    <name type="synonym">Cyclotella nana</name>
    <dbReference type="NCBI Taxonomy" id="35128"/>
    <lineage>
        <taxon>Eukaryota</taxon>
        <taxon>Sar</taxon>
        <taxon>Stramenopiles</taxon>
        <taxon>Ochrophyta</taxon>
        <taxon>Bacillariophyta</taxon>
        <taxon>Coscinodiscophyceae</taxon>
        <taxon>Thalassiosirophycidae</taxon>
        <taxon>Thalassiosirales</taxon>
        <taxon>Thalassiosiraceae</taxon>
        <taxon>Thalassiosira</taxon>
    </lineage>
</organism>
<keyword id="KW-0150">Chloroplast</keyword>
<keyword id="KW-0472">Membrane</keyword>
<keyword id="KW-0602">Photosynthesis</keyword>
<keyword id="KW-0604">Photosystem II</keyword>
<keyword id="KW-0934">Plastid</keyword>
<keyword id="KW-0793">Thylakoid</keyword>
<reference key="1">
    <citation type="journal article" date="2007" name="Mol. Genet. Genomics">
        <title>Chloroplast genomes of the diatoms Phaeodactylum tricornutum and Thalassiosira pseudonana: comparison with other plastid genomes of the red lineage.</title>
        <authorList>
            <person name="Oudot-Le Secq M.-P."/>
            <person name="Grimwood J."/>
            <person name="Shapiro H."/>
            <person name="Armbrust E.V."/>
            <person name="Bowler C."/>
            <person name="Green B.R."/>
        </authorList>
    </citation>
    <scope>NUCLEOTIDE SEQUENCE [LARGE SCALE GENOMIC DNA]</scope>
    <source>
        <strain>CCMP1335 / NEPCC58 / CCAP 1085/12</strain>
    </source>
</reference>
<protein>
    <recommendedName>
        <fullName evidence="1">Photosystem II reaction center Psb28 protein</fullName>
    </recommendedName>
    <alternativeName>
        <fullName evidence="1">Photosystem II 13 kDa protein</fullName>
    </alternativeName>
    <alternativeName>
        <fullName evidence="1">Photosystem II reaction center W protein</fullName>
    </alternativeName>
</protein>
<feature type="chain" id="PRO_0000275700" description="Photosystem II reaction center Psb28 protein">
    <location>
        <begin position="1"/>
        <end position="114"/>
    </location>
</feature>
<geneLocation type="chloroplast"/>
<sequence>MIARIQFIKGIDEKVLPDVRLTRSRDGSTGTATFLFKNANLINKSLALNGEITGMYMIDEEGILETRDVSARFVNGKPQAVESIYIMKSPEAWDRFMRFMERYGESNGLAFTKA</sequence>